<dbReference type="EC" id="2.1.2.1" evidence="1"/>
<dbReference type="EMBL" id="CP000253">
    <property type="protein sequence ID" value="ABD31385.1"/>
    <property type="molecule type" value="Genomic_DNA"/>
</dbReference>
<dbReference type="RefSeq" id="WP_000120494.1">
    <property type="nucleotide sequence ID" value="NZ_LS483365.1"/>
</dbReference>
<dbReference type="RefSeq" id="YP_500830.1">
    <property type="nucleotide sequence ID" value="NC_007795.1"/>
</dbReference>
<dbReference type="SMR" id="Q2FWE5"/>
<dbReference type="STRING" id="93061.SAOUHSC_02354"/>
<dbReference type="PaxDb" id="1280-SAXN108_2358"/>
<dbReference type="GeneID" id="3919397"/>
<dbReference type="KEGG" id="sao:SAOUHSC_02354"/>
<dbReference type="PATRIC" id="fig|93061.5.peg.2131"/>
<dbReference type="eggNOG" id="COG0112">
    <property type="taxonomic scope" value="Bacteria"/>
</dbReference>
<dbReference type="HOGENOM" id="CLU_022477_2_1_9"/>
<dbReference type="OrthoDB" id="9803846at2"/>
<dbReference type="UniPathway" id="UPA00193"/>
<dbReference type="UniPathway" id="UPA00288">
    <property type="reaction ID" value="UER01023"/>
</dbReference>
<dbReference type="PRO" id="PR:Q2FWE5"/>
<dbReference type="Proteomes" id="UP000008816">
    <property type="component" value="Chromosome"/>
</dbReference>
<dbReference type="GO" id="GO:0005737">
    <property type="term" value="C:cytoplasm"/>
    <property type="evidence" value="ECO:0000318"/>
    <property type="project" value="GO_Central"/>
</dbReference>
<dbReference type="GO" id="GO:0005829">
    <property type="term" value="C:cytosol"/>
    <property type="evidence" value="ECO:0000318"/>
    <property type="project" value="GO_Central"/>
</dbReference>
<dbReference type="GO" id="GO:0004372">
    <property type="term" value="F:glycine hydroxymethyltransferase activity"/>
    <property type="evidence" value="ECO:0000318"/>
    <property type="project" value="GO_Central"/>
</dbReference>
<dbReference type="GO" id="GO:0030170">
    <property type="term" value="F:pyridoxal phosphate binding"/>
    <property type="evidence" value="ECO:0000318"/>
    <property type="project" value="GO_Central"/>
</dbReference>
<dbReference type="GO" id="GO:0019264">
    <property type="term" value="P:glycine biosynthetic process from serine"/>
    <property type="evidence" value="ECO:0000318"/>
    <property type="project" value="GO_Central"/>
</dbReference>
<dbReference type="GO" id="GO:0035999">
    <property type="term" value="P:tetrahydrofolate interconversion"/>
    <property type="evidence" value="ECO:0007669"/>
    <property type="project" value="UniProtKB-UniRule"/>
</dbReference>
<dbReference type="GO" id="GO:0046653">
    <property type="term" value="P:tetrahydrofolate metabolic process"/>
    <property type="evidence" value="ECO:0000318"/>
    <property type="project" value="GO_Central"/>
</dbReference>
<dbReference type="CDD" id="cd00378">
    <property type="entry name" value="SHMT"/>
    <property type="match status" value="1"/>
</dbReference>
<dbReference type="FunFam" id="3.40.640.10:FF:000001">
    <property type="entry name" value="Serine hydroxymethyltransferase"/>
    <property type="match status" value="1"/>
</dbReference>
<dbReference type="FunFam" id="3.90.1150.10:FF:000003">
    <property type="entry name" value="Serine hydroxymethyltransferase"/>
    <property type="match status" value="1"/>
</dbReference>
<dbReference type="Gene3D" id="3.90.1150.10">
    <property type="entry name" value="Aspartate Aminotransferase, domain 1"/>
    <property type="match status" value="1"/>
</dbReference>
<dbReference type="Gene3D" id="3.40.640.10">
    <property type="entry name" value="Type I PLP-dependent aspartate aminotransferase-like (Major domain)"/>
    <property type="match status" value="1"/>
</dbReference>
<dbReference type="HAMAP" id="MF_00051">
    <property type="entry name" value="SHMT"/>
    <property type="match status" value="1"/>
</dbReference>
<dbReference type="InterPro" id="IPR015424">
    <property type="entry name" value="PyrdxlP-dep_Trfase"/>
</dbReference>
<dbReference type="InterPro" id="IPR015421">
    <property type="entry name" value="PyrdxlP-dep_Trfase_major"/>
</dbReference>
<dbReference type="InterPro" id="IPR015422">
    <property type="entry name" value="PyrdxlP-dep_Trfase_small"/>
</dbReference>
<dbReference type="InterPro" id="IPR001085">
    <property type="entry name" value="Ser_HO-MeTrfase"/>
</dbReference>
<dbReference type="InterPro" id="IPR049943">
    <property type="entry name" value="Ser_HO-MeTrfase-like"/>
</dbReference>
<dbReference type="InterPro" id="IPR019798">
    <property type="entry name" value="Ser_HO-MeTrfase_PLP_BS"/>
</dbReference>
<dbReference type="InterPro" id="IPR039429">
    <property type="entry name" value="SHMT-like_dom"/>
</dbReference>
<dbReference type="NCBIfam" id="NF000586">
    <property type="entry name" value="PRK00011.1"/>
    <property type="match status" value="1"/>
</dbReference>
<dbReference type="PANTHER" id="PTHR11680">
    <property type="entry name" value="SERINE HYDROXYMETHYLTRANSFERASE"/>
    <property type="match status" value="1"/>
</dbReference>
<dbReference type="PANTHER" id="PTHR11680:SF35">
    <property type="entry name" value="SERINE HYDROXYMETHYLTRANSFERASE 1"/>
    <property type="match status" value="1"/>
</dbReference>
<dbReference type="Pfam" id="PF00464">
    <property type="entry name" value="SHMT"/>
    <property type="match status" value="1"/>
</dbReference>
<dbReference type="PIRSF" id="PIRSF000412">
    <property type="entry name" value="SHMT"/>
    <property type="match status" value="1"/>
</dbReference>
<dbReference type="SUPFAM" id="SSF53383">
    <property type="entry name" value="PLP-dependent transferases"/>
    <property type="match status" value="1"/>
</dbReference>
<dbReference type="PROSITE" id="PS00096">
    <property type="entry name" value="SHMT"/>
    <property type="match status" value="1"/>
</dbReference>
<sequence>MSYITKQDKVIAEAIEREFQRQNSNIELIASENFVSEAVMEAQGSVLTNKYAEGYPGRRYYGGCEFVDVTESIAIDRAKALFGAEHVNVQPHSGSQANMAVYLVALEMGDTVLGMNLSHGGHLTHGAPVNFSGKFYNFVEYGVDKDTERINYDEVRKLALEHKPKLIVAGASAYSRTIDFKKFKEIADEVNAKLMVDMAHIAGLVAAGLHPNPVEYADFVTTTTHKTLRGPRGGMILCKEEYKKDIDKTIFPGIQGGPLEHVIAAKAVAFGEALENNFKTYQQQVVKNAKVLAEALINEGFRIVSGGTDNHLVAVDVKGSIGLTGKEAEETLDSVGITCNKNTIPFDQEKPFVTSGIRLGTPAATTRGFDEKAFEEVAKIISLALKNSKDEEKLQQAKERVAKLTAEYPLYQ</sequence>
<feature type="chain" id="PRO_1000006326" description="Serine hydroxymethyltransferase">
    <location>
        <begin position="1"/>
        <end position="412"/>
    </location>
</feature>
<feature type="binding site" evidence="1">
    <location>
        <position position="117"/>
    </location>
    <ligand>
        <name>(6S)-5,6,7,8-tetrahydrofolate</name>
        <dbReference type="ChEBI" id="CHEBI:57453"/>
    </ligand>
</feature>
<feature type="binding site" evidence="1">
    <location>
        <begin position="121"/>
        <end position="123"/>
    </location>
    <ligand>
        <name>(6S)-5,6,7,8-tetrahydrofolate</name>
        <dbReference type="ChEBI" id="CHEBI:57453"/>
    </ligand>
</feature>
<feature type="site" description="Plays an important role in substrate specificity" evidence="1">
    <location>
        <position position="225"/>
    </location>
</feature>
<feature type="modified residue" description="N6-(pyridoxal phosphate)lysine" evidence="1">
    <location>
        <position position="226"/>
    </location>
</feature>
<keyword id="KW-0028">Amino-acid biosynthesis</keyword>
<keyword id="KW-0963">Cytoplasm</keyword>
<keyword id="KW-0554">One-carbon metabolism</keyword>
<keyword id="KW-0663">Pyridoxal phosphate</keyword>
<keyword id="KW-1185">Reference proteome</keyword>
<keyword id="KW-0808">Transferase</keyword>
<accession>Q2FWE5</accession>
<gene>
    <name evidence="1" type="primary">glyA</name>
    <name type="ordered locus">SAOUHSC_02354</name>
</gene>
<reference key="1">
    <citation type="book" date="2006" name="Gram positive pathogens, 2nd edition">
        <title>The Staphylococcus aureus NCTC 8325 genome.</title>
        <editorList>
            <person name="Fischetti V."/>
            <person name="Novick R."/>
            <person name="Ferretti J."/>
            <person name="Portnoy D."/>
            <person name="Rood J."/>
        </editorList>
        <authorList>
            <person name="Gillaspy A.F."/>
            <person name="Worrell V."/>
            <person name="Orvis J."/>
            <person name="Roe B.A."/>
            <person name="Dyer D.W."/>
            <person name="Iandolo J.J."/>
        </authorList>
    </citation>
    <scope>NUCLEOTIDE SEQUENCE [LARGE SCALE GENOMIC DNA]</scope>
    <source>
        <strain>NCTC 8325 / PS 47</strain>
    </source>
</reference>
<comment type="function">
    <text evidence="1">Catalyzes the reversible interconversion of serine and glycine with tetrahydrofolate (THF) serving as the one-carbon carrier. This reaction serves as the major source of one-carbon groups required for the biosynthesis of purines, thymidylate, methionine, and other important biomolecules. Also exhibits THF-independent aldolase activity toward beta-hydroxyamino acids, producing glycine and aldehydes, via a retro-aldol mechanism.</text>
</comment>
<comment type="catalytic activity">
    <reaction evidence="1">
        <text>(6R)-5,10-methylene-5,6,7,8-tetrahydrofolate + glycine + H2O = (6S)-5,6,7,8-tetrahydrofolate + L-serine</text>
        <dbReference type="Rhea" id="RHEA:15481"/>
        <dbReference type="ChEBI" id="CHEBI:15377"/>
        <dbReference type="ChEBI" id="CHEBI:15636"/>
        <dbReference type="ChEBI" id="CHEBI:33384"/>
        <dbReference type="ChEBI" id="CHEBI:57305"/>
        <dbReference type="ChEBI" id="CHEBI:57453"/>
        <dbReference type="EC" id="2.1.2.1"/>
    </reaction>
</comment>
<comment type="cofactor">
    <cofactor evidence="1">
        <name>pyridoxal 5'-phosphate</name>
        <dbReference type="ChEBI" id="CHEBI:597326"/>
    </cofactor>
</comment>
<comment type="pathway">
    <text evidence="1">One-carbon metabolism; tetrahydrofolate interconversion.</text>
</comment>
<comment type="pathway">
    <text evidence="1">Amino-acid biosynthesis; glycine biosynthesis; glycine from L-serine: step 1/1.</text>
</comment>
<comment type="subunit">
    <text evidence="1">Homodimer.</text>
</comment>
<comment type="subcellular location">
    <subcellularLocation>
        <location evidence="1">Cytoplasm</location>
    </subcellularLocation>
</comment>
<comment type="similarity">
    <text evidence="1">Belongs to the SHMT family.</text>
</comment>
<proteinExistence type="inferred from homology"/>
<organism>
    <name type="scientific">Staphylococcus aureus (strain NCTC 8325 / PS 47)</name>
    <dbReference type="NCBI Taxonomy" id="93061"/>
    <lineage>
        <taxon>Bacteria</taxon>
        <taxon>Bacillati</taxon>
        <taxon>Bacillota</taxon>
        <taxon>Bacilli</taxon>
        <taxon>Bacillales</taxon>
        <taxon>Staphylococcaceae</taxon>
        <taxon>Staphylococcus</taxon>
    </lineage>
</organism>
<protein>
    <recommendedName>
        <fullName evidence="1">Serine hydroxymethyltransferase</fullName>
        <shortName evidence="1">SHMT</shortName>
        <shortName evidence="1">Serine methylase</shortName>
        <ecNumber evidence="1">2.1.2.1</ecNumber>
    </recommendedName>
</protein>
<evidence type="ECO:0000255" key="1">
    <source>
        <dbReference type="HAMAP-Rule" id="MF_00051"/>
    </source>
</evidence>
<name>GLYA_STAA8</name>